<reference key="1">
    <citation type="journal article" date="1996" name="Mol. Plant Microbe Interact.">
        <title>Characterization and distribution of tartrate utilization genes in the grapevine pathogen Agrobacterium vitis.</title>
        <authorList>
            <person name="Salomone J.-Y."/>
            <person name="Crouzet P."/>
            <person name="de Ruffray P."/>
            <person name="Otten L."/>
        </authorList>
    </citation>
    <scope>NUCLEOTIDE SEQUENCE [GENOMIC DNA]</scope>
    <source>
        <strain>AB3</strain>
    </source>
</reference>
<dbReference type="EC" id="1.1.1.81"/>
<dbReference type="EMBL" id="U32375">
    <property type="protein sequence ID" value="AAB61624.1"/>
    <property type="molecule type" value="Genomic_DNA"/>
</dbReference>
<dbReference type="SMR" id="P70788"/>
<dbReference type="UniPathway" id="UPA00839">
    <property type="reaction ID" value="UER00804"/>
</dbReference>
<dbReference type="GO" id="GO:0005737">
    <property type="term" value="C:cytoplasm"/>
    <property type="evidence" value="ECO:0007669"/>
    <property type="project" value="TreeGrafter"/>
</dbReference>
<dbReference type="GO" id="GO:0008887">
    <property type="term" value="F:glycerate kinase activity"/>
    <property type="evidence" value="ECO:0007669"/>
    <property type="project" value="InterPro"/>
</dbReference>
<dbReference type="GO" id="GO:0008465">
    <property type="term" value="F:hydroxypyruvate reductase (NADH) activity"/>
    <property type="evidence" value="ECO:0007669"/>
    <property type="project" value="RHEA"/>
</dbReference>
<dbReference type="GO" id="GO:0120509">
    <property type="term" value="F:hydroxypyruvate reductase (NADPH) activity"/>
    <property type="evidence" value="ECO:0007669"/>
    <property type="project" value="RHEA"/>
</dbReference>
<dbReference type="Gene3D" id="3.40.50.10180">
    <property type="entry name" value="Glycerate kinase, MOFRL-like N-terminal domain"/>
    <property type="match status" value="1"/>
</dbReference>
<dbReference type="Gene3D" id="3.40.1480.10">
    <property type="entry name" value="MOFRL domain"/>
    <property type="match status" value="1"/>
</dbReference>
<dbReference type="InterPro" id="IPR037035">
    <property type="entry name" value="GK-like_C_sf"/>
</dbReference>
<dbReference type="InterPro" id="IPR038614">
    <property type="entry name" value="GK_N_sf"/>
</dbReference>
<dbReference type="InterPro" id="IPR007835">
    <property type="entry name" value="MOFRL"/>
</dbReference>
<dbReference type="InterPro" id="IPR025286">
    <property type="entry name" value="MOFRL_assoc_dom"/>
</dbReference>
<dbReference type="InterPro" id="IPR039760">
    <property type="entry name" value="MOFRL_protein"/>
</dbReference>
<dbReference type="PANTHER" id="PTHR12227">
    <property type="entry name" value="GLYCERATE KINASE"/>
    <property type="match status" value="1"/>
</dbReference>
<dbReference type="PANTHER" id="PTHR12227:SF0">
    <property type="entry name" value="GLYCERATE KINASE"/>
    <property type="match status" value="1"/>
</dbReference>
<dbReference type="Pfam" id="PF13660">
    <property type="entry name" value="DUF4147"/>
    <property type="match status" value="1"/>
</dbReference>
<dbReference type="Pfam" id="PF05161">
    <property type="entry name" value="MOFRL"/>
    <property type="match status" value="1"/>
</dbReference>
<dbReference type="SUPFAM" id="SSF82544">
    <property type="entry name" value="GckA/TtuD-like"/>
    <property type="match status" value="1"/>
</dbReference>
<gene>
    <name type="primary">ttuD</name>
</gene>
<comment type="function">
    <text>Degrades an unidentified toxic product from the first step of tartrate degradation.</text>
</comment>
<comment type="catalytic activity">
    <reaction>
        <text>(R)-glycerate + NAD(+) = 3-hydroxypyruvate + NADH + H(+)</text>
        <dbReference type="Rhea" id="RHEA:17905"/>
        <dbReference type="ChEBI" id="CHEBI:15378"/>
        <dbReference type="ChEBI" id="CHEBI:16659"/>
        <dbReference type="ChEBI" id="CHEBI:17180"/>
        <dbReference type="ChEBI" id="CHEBI:57540"/>
        <dbReference type="ChEBI" id="CHEBI:57945"/>
        <dbReference type="EC" id="1.1.1.81"/>
    </reaction>
</comment>
<comment type="catalytic activity">
    <reaction>
        <text>(R)-glycerate + NADP(+) = 3-hydroxypyruvate + NADPH + H(+)</text>
        <dbReference type="Rhea" id="RHEA:18657"/>
        <dbReference type="ChEBI" id="CHEBI:15378"/>
        <dbReference type="ChEBI" id="CHEBI:16659"/>
        <dbReference type="ChEBI" id="CHEBI:17180"/>
        <dbReference type="ChEBI" id="CHEBI:57783"/>
        <dbReference type="ChEBI" id="CHEBI:58349"/>
        <dbReference type="EC" id="1.1.1.81"/>
    </reaction>
</comment>
<comment type="pathway">
    <text>Carbohydrate acid metabolism; tartrate degradation; 3-hydroxypyruvate from D-glycerate: step 1/1.</text>
</comment>
<comment type="induction">
    <text>By tartrate.</text>
</comment>
<proteinExistence type="evidence at transcript level"/>
<name>TTUD3_AGRVI</name>
<feature type="chain" id="PRO_0000065681" description="Putative hydroxypyruvate reductase">
    <location>
        <begin position="1"/>
        <end position="385"/>
    </location>
</feature>
<keyword id="KW-0521">NADP</keyword>
<keyword id="KW-0560">Oxidoreductase</keyword>
<keyword id="KW-0614">Plasmid</keyword>
<geneLocation type="plasmid">
    <name>pTrAB3</name>
</geneLocation>
<organism>
    <name type="scientific">Agrobacterium vitis</name>
    <name type="common">Rhizobium vitis</name>
    <dbReference type="NCBI Taxonomy" id="373"/>
    <lineage>
        <taxon>Bacteria</taxon>
        <taxon>Pseudomonadati</taxon>
        <taxon>Pseudomonadota</taxon>
        <taxon>Alphaproteobacteria</taxon>
        <taxon>Hyphomicrobiales</taxon>
        <taxon>Rhizobiaceae</taxon>
        <taxon>Rhizobium/Agrobacterium group</taxon>
        <taxon>Agrobacterium</taxon>
    </lineage>
</organism>
<protein>
    <recommendedName>
        <fullName>Putative hydroxypyruvate reductase</fullName>
        <ecNumber>1.1.1.81</ecNumber>
    </recommendedName>
</protein>
<accession>P70788</accession>
<sequence>MGRCVVIGAGKASAAMAAALDTVWSDVDLSGVVVTRYGHAVPSGRIRIIEASHPVPDDMSVEAAVRIIGAVRDLGPDDLVIALISGGGSSLLVSPAAGMTLADKKAVNKALLASGATISEMNAVRKQLSGIKGGRLAQLAHPARVVTLVISDVPGDDPSEIASGPTVANDTTIDDAREIVSRYRLVLPPAAQDVLANGGARNCTGKVSSDVRMIASPSMALDAAAAVAAANGLTPVILGDALQGEARDVGTVFAGIAMSASTKGLPVRGPAVLLSGGETSVSLPADTKGRGGRNSEFLLSLAIGLDGAKGIWALSGDTDGIDGIEDAAGAMIGPDSLARMRGSGIDPRSALSRHDSYTAFKAIDDLVITGPTLTNVNDIRAILIG</sequence>